<sequence>MAKRNVTAKKKVVKKNIARGVVYISATFNNTNITITDEMGNVICWSTAGGLGFKGSKKSTPYAAQQAVESALSKAKEHGVKEVGIKVQGPGSGRETAIKSVGATEGVKVLWIKDITPLPHNGCRPPKRRRV</sequence>
<keyword id="KW-1185">Reference proteome</keyword>
<keyword id="KW-0687">Ribonucleoprotein</keyword>
<keyword id="KW-0689">Ribosomal protein</keyword>
<keyword id="KW-0694">RNA-binding</keyword>
<keyword id="KW-0699">rRNA-binding</keyword>
<name>RS11_HELPG</name>
<reference key="1">
    <citation type="journal article" date="2009" name="J. Bacteriol.">
        <title>The complete genome sequence of Helicobacter pylori strain G27.</title>
        <authorList>
            <person name="Baltrus D.A."/>
            <person name="Amieva M.R."/>
            <person name="Covacci A."/>
            <person name="Lowe T.M."/>
            <person name="Merrell D.S."/>
            <person name="Ottemann K.M."/>
            <person name="Stein M."/>
            <person name="Salama N.R."/>
            <person name="Guillemin K."/>
        </authorList>
    </citation>
    <scope>NUCLEOTIDE SEQUENCE [LARGE SCALE GENOMIC DNA]</scope>
    <source>
        <strain>G27</strain>
    </source>
</reference>
<comment type="function">
    <text evidence="1">Located on the platform of the 30S subunit, it bridges several disparate RNA helices of the 16S rRNA. Forms part of the Shine-Dalgarno cleft in the 70S ribosome.</text>
</comment>
<comment type="subunit">
    <text evidence="1">Part of the 30S ribosomal subunit. Interacts with proteins S7 and S18. Binds to IF-3.</text>
</comment>
<comment type="similarity">
    <text evidence="1">Belongs to the universal ribosomal protein uS11 family.</text>
</comment>
<evidence type="ECO:0000255" key="1">
    <source>
        <dbReference type="HAMAP-Rule" id="MF_01310"/>
    </source>
</evidence>
<evidence type="ECO:0000305" key="2"/>
<proteinExistence type="inferred from homology"/>
<feature type="chain" id="PRO_1000141100" description="Small ribosomal subunit protein uS11">
    <location>
        <begin position="1"/>
        <end position="131"/>
    </location>
</feature>
<gene>
    <name evidence="1" type="primary">rpsK</name>
    <name type="ordered locus">HPG27_1245</name>
</gene>
<accession>B5Z8U4</accession>
<dbReference type="EMBL" id="CP001173">
    <property type="protein sequence ID" value="ACI27993.1"/>
    <property type="molecule type" value="Genomic_DNA"/>
</dbReference>
<dbReference type="RefSeq" id="WP_001129289.1">
    <property type="nucleotide sequence ID" value="NC_011333.1"/>
</dbReference>
<dbReference type="SMR" id="B5Z8U4"/>
<dbReference type="GeneID" id="93237574"/>
<dbReference type="KEGG" id="hpg:HPG27_1245"/>
<dbReference type="HOGENOM" id="CLU_072439_5_0_7"/>
<dbReference type="Proteomes" id="UP000001735">
    <property type="component" value="Chromosome"/>
</dbReference>
<dbReference type="GO" id="GO:1990904">
    <property type="term" value="C:ribonucleoprotein complex"/>
    <property type="evidence" value="ECO:0007669"/>
    <property type="project" value="UniProtKB-KW"/>
</dbReference>
<dbReference type="GO" id="GO:0005840">
    <property type="term" value="C:ribosome"/>
    <property type="evidence" value="ECO:0007669"/>
    <property type="project" value="UniProtKB-KW"/>
</dbReference>
<dbReference type="GO" id="GO:0019843">
    <property type="term" value="F:rRNA binding"/>
    <property type="evidence" value="ECO:0007669"/>
    <property type="project" value="UniProtKB-UniRule"/>
</dbReference>
<dbReference type="GO" id="GO:0003735">
    <property type="term" value="F:structural constituent of ribosome"/>
    <property type="evidence" value="ECO:0007669"/>
    <property type="project" value="InterPro"/>
</dbReference>
<dbReference type="GO" id="GO:0006412">
    <property type="term" value="P:translation"/>
    <property type="evidence" value="ECO:0007669"/>
    <property type="project" value="UniProtKB-UniRule"/>
</dbReference>
<dbReference type="FunFam" id="3.30.420.80:FF:000001">
    <property type="entry name" value="30S ribosomal protein S11"/>
    <property type="match status" value="1"/>
</dbReference>
<dbReference type="Gene3D" id="3.30.420.80">
    <property type="entry name" value="Ribosomal protein S11"/>
    <property type="match status" value="1"/>
</dbReference>
<dbReference type="HAMAP" id="MF_01310">
    <property type="entry name" value="Ribosomal_uS11"/>
    <property type="match status" value="1"/>
</dbReference>
<dbReference type="InterPro" id="IPR001971">
    <property type="entry name" value="Ribosomal_uS11"/>
</dbReference>
<dbReference type="InterPro" id="IPR019981">
    <property type="entry name" value="Ribosomal_uS11_bac-type"/>
</dbReference>
<dbReference type="InterPro" id="IPR018102">
    <property type="entry name" value="Ribosomal_uS11_CS"/>
</dbReference>
<dbReference type="InterPro" id="IPR036967">
    <property type="entry name" value="Ribosomal_uS11_sf"/>
</dbReference>
<dbReference type="NCBIfam" id="NF003698">
    <property type="entry name" value="PRK05309.1"/>
    <property type="match status" value="1"/>
</dbReference>
<dbReference type="NCBIfam" id="TIGR03632">
    <property type="entry name" value="uS11_bact"/>
    <property type="match status" value="1"/>
</dbReference>
<dbReference type="PANTHER" id="PTHR11759">
    <property type="entry name" value="40S RIBOSOMAL PROTEIN S14/30S RIBOSOMAL PROTEIN S11"/>
    <property type="match status" value="1"/>
</dbReference>
<dbReference type="Pfam" id="PF00411">
    <property type="entry name" value="Ribosomal_S11"/>
    <property type="match status" value="1"/>
</dbReference>
<dbReference type="PIRSF" id="PIRSF002131">
    <property type="entry name" value="Ribosomal_S11"/>
    <property type="match status" value="1"/>
</dbReference>
<dbReference type="SUPFAM" id="SSF53137">
    <property type="entry name" value="Translational machinery components"/>
    <property type="match status" value="1"/>
</dbReference>
<dbReference type="PROSITE" id="PS00054">
    <property type="entry name" value="RIBOSOMAL_S11"/>
    <property type="match status" value="1"/>
</dbReference>
<protein>
    <recommendedName>
        <fullName evidence="1">Small ribosomal subunit protein uS11</fullName>
    </recommendedName>
    <alternativeName>
        <fullName evidence="2">30S ribosomal protein S11</fullName>
    </alternativeName>
</protein>
<organism>
    <name type="scientific">Helicobacter pylori (strain G27)</name>
    <dbReference type="NCBI Taxonomy" id="563041"/>
    <lineage>
        <taxon>Bacteria</taxon>
        <taxon>Pseudomonadati</taxon>
        <taxon>Campylobacterota</taxon>
        <taxon>Epsilonproteobacteria</taxon>
        <taxon>Campylobacterales</taxon>
        <taxon>Helicobacteraceae</taxon>
        <taxon>Helicobacter</taxon>
    </lineage>
</organism>